<keyword id="KW-0002">3D-structure</keyword>
<keyword id="KW-0067">ATP-binding</keyword>
<keyword id="KW-0963">Cytoplasm</keyword>
<keyword id="KW-0237">DNA synthesis</keyword>
<keyword id="KW-0418">Kinase</keyword>
<keyword id="KW-0479">Metal-binding</keyword>
<keyword id="KW-0547">Nucleotide-binding</keyword>
<keyword id="KW-0808">Transferase</keyword>
<keyword id="KW-0862">Zinc</keyword>
<reference key="1">
    <citation type="journal article" date="2005" name="J. Bacteriol.">
        <title>Insights on evolution of virulence and resistance from the complete genome analysis of an early methicillin-resistant Staphylococcus aureus strain and a biofilm-producing methicillin-resistant Staphylococcus epidermidis strain.</title>
        <authorList>
            <person name="Gill S.R."/>
            <person name="Fouts D.E."/>
            <person name="Archer G.L."/>
            <person name="Mongodin E.F."/>
            <person name="DeBoy R.T."/>
            <person name="Ravel J."/>
            <person name="Paulsen I.T."/>
            <person name="Kolonay J.F."/>
            <person name="Brinkac L.M."/>
            <person name="Beanan M.J."/>
            <person name="Dodson R.J."/>
            <person name="Daugherty S.C."/>
            <person name="Madupu R."/>
            <person name="Angiuoli S.V."/>
            <person name="Durkin A.S."/>
            <person name="Haft D.H."/>
            <person name="Vamathevan J.J."/>
            <person name="Khouri H."/>
            <person name="Utterback T.R."/>
            <person name="Lee C."/>
            <person name="Dimitrov G."/>
            <person name="Jiang L."/>
            <person name="Qin H."/>
            <person name="Weidman J."/>
            <person name="Tran K."/>
            <person name="Kang K.H."/>
            <person name="Hance I.R."/>
            <person name="Nelson K.E."/>
            <person name="Fraser C.M."/>
        </authorList>
    </citation>
    <scope>NUCLEOTIDE SEQUENCE [LARGE SCALE GENOMIC DNA]</scope>
    <source>
        <strain>COL</strain>
    </source>
</reference>
<organism>
    <name type="scientific">Staphylococcus aureus (strain COL)</name>
    <dbReference type="NCBI Taxonomy" id="93062"/>
    <lineage>
        <taxon>Bacteria</taxon>
        <taxon>Bacillati</taxon>
        <taxon>Bacillota</taxon>
        <taxon>Bacilli</taxon>
        <taxon>Bacillales</taxon>
        <taxon>Staphylococcaceae</taxon>
        <taxon>Staphylococcus</taxon>
    </lineage>
</organism>
<evidence type="ECO:0000255" key="1">
    <source>
        <dbReference type="HAMAP-Rule" id="MF_00124"/>
    </source>
</evidence>
<dbReference type="EC" id="2.7.1.21" evidence="1"/>
<dbReference type="EMBL" id="CP000046">
    <property type="protein sequence ID" value="AAW38421.1"/>
    <property type="molecule type" value="Genomic_DNA"/>
</dbReference>
<dbReference type="RefSeq" id="WP_000273356.1">
    <property type="nucleotide sequence ID" value="NZ_JBGOFO010000007.1"/>
</dbReference>
<dbReference type="PDB" id="8Y7W">
    <property type="method" value="X-ray"/>
    <property type="resolution" value="2.30 A"/>
    <property type="chains" value="A=1-199"/>
</dbReference>
<dbReference type="PDBsum" id="8Y7W"/>
<dbReference type="SMR" id="Q5HE81"/>
<dbReference type="KEGG" id="sac:SACOL2111"/>
<dbReference type="HOGENOM" id="CLU_064400_3_0_9"/>
<dbReference type="Proteomes" id="UP000000530">
    <property type="component" value="Chromosome"/>
</dbReference>
<dbReference type="GO" id="GO:0005829">
    <property type="term" value="C:cytosol"/>
    <property type="evidence" value="ECO:0007669"/>
    <property type="project" value="TreeGrafter"/>
</dbReference>
<dbReference type="GO" id="GO:0005524">
    <property type="term" value="F:ATP binding"/>
    <property type="evidence" value="ECO:0007669"/>
    <property type="project" value="UniProtKB-UniRule"/>
</dbReference>
<dbReference type="GO" id="GO:0004797">
    <property type="term" value="F:thymidine kinase activity"/>
    <property type="evidence" value="ECO:0007669"/>
    <property type="project" value="UniProtKB-UniRule"/>
</dbReference>
<dbReference type="GO" id="GO:0008270">
    <property type="term" value="F:zinc ion binding"/>
    <property type="evidence" value="ECO:0007669"/>
    <property type="project" value="UniProtKB-UniRule"/>
</dbReference>
<dbReference type="GO" id="GO:0071897">
    <property type="term" value="P:DNA biosynthetic process"/>
    <property type="evidence" value="ECO:0007669"/>
    <property type="project" value="UniProtKB-KW"/>
</dbReference>
<dbReference type="GO" id="GO:0046104">
    <property type="term" value="P:thymidine metabolic process"/>
    <property type="evidence" value="ECO:0007669"/>
    <property type="project" value="TreeGrafter"/>
</dbReference>
<dbReference type="FunFam" id="3.30.60.20:FF:000026">
    <property type="entry name" value="Thymidine kinase"/>
    <property type="match status" value="1"/>
</dbReference>
<dbReference type="FunFam" id="3.40.50.300:FF:000384">
    <property type="entry name" value="Thymidine kinase"/>
    <property type="match status" value="1"/>
</dbReference>
<dbReference type="Gene3D" id="3.30.60.20">
    <property type="match status" value="1"/>
</dbReference>
<dbReference type="Gene3D" id="3.40.50.300">
    <property type="entry name" value="P-loop containing nucleotide triphosphate hydrolases"/>
    <property type="match status" value="1"/>
</dbReference>
<dbReference type="HAMAP" id="MF_00124">
    <property type="entry name" value="Thymidine_kinase"/>
    <property type="match status" value="1"/>
</dbReference>
<dbReference type="InterPro" id="IPR027417">
    <property type="entry name" value="P-loop_NTPase"/>
</dbReference>
<dbReference type="InterPro" id="IPR001267">
    <property type="entry name" value="Thymidine_kinase"/>
</dbReference>
<dbReference type="InterPro" id="IPR020633">
    <property type="entry name" value="Thymidine_kinase_CS"/>
</dbReference>
<dbReference type="NCBIfam" id="NF003296">
    <property type="entry name" value="PRK04296.1-1"/>
    <property type="match status" value="1"/>
</dbReference>
<dbReference type="PANTHER" id="PTHR11441">
    <property type="entry name" value="THYMIDINE KINASE"/>
    <property type="match status" value="1"/>
</dbReference>
<dbReference type="PANTHER" id="PTHR11441:SF0">
    <property type="entry name" value="THYMIDINE KINASE, CYTOSOLIC"/>
    <property type="match status" value="1"/>
</dbReference>
<dbReference type="Pfam" id="PF00265">
    <property type="entry name" value="TK"/>
    <property type="match status" value="1"/>
</dbReference>
<dbReference type="PIRSF" id="PIRSF035805">
    <property type="entry name" value="TK_cell"/>
    <property type="match status" value="1"/>
</dbReference>
<dbReference type="SUPFAM" id="SSF57716">
    <property type="entry name" value="Glucocorticoid receptor-like (DNA-binding domain)"/>
    <property type="match status" value="1"/>
</dbReference>
<dbReference type="SUPFAM" id="SSF52540">
    <property type="entry name" value="P-loop containing nucleoside triphosphate hydrolases"/>
    <property type="match status" value="1"/>
</dbReference>
<dbReference type="PROSITE" id="PS00603">
    <property type="entry name" value="TK_CELLULAR_TYPE"/>
    <property type="match status" value="1"/>
</dbReference>
<protein>
    <recommendedName>
        <fullName evidence="1">Thymidine kinase</fullName>
        <ecNumber evidence="1">2.7.1.21</ecNumber>
    </recommendedName>
</protein>
<gene>
    <name evidence="1" type="primary">tdk</name>
    <name type="ordered locus">SACOL2111</name>
</gene>
<feature type="chain" id="PRO_0000175018" description="Thymidine kinase">
    <location>
        <begin position="1"/>
        <end position="199"/>
    </location>
</feature>
<feature type="active site" description="Proton acceptor" evidence="1">
    <location>
        <position position="89"/>
    </location>
</feature>
<feature type="binding site" evidence="1">
    <location>
        <begin position="15"/>
        <end position="22"/>
    </location>
    <ligand>
        <name>ATP</name>
        <dbReference type="ChEBI" id="CHEBI:30616"/>
    </ligand>
</feature>
<feature type="binding site" evidence="1">
    <location>
        <begin position="88"/>
        <end position="91"/>
    </location>
    <ligand>
        <name>ATP</name>
        <dbReference type="ChEBI" id="CHEBI:30616"/>
    </ligand>
</feature>
<feature type="binding site" evidence="1">
    <location>
        <position position="145"/>
    </location>
    <ligand>
        <name>Zn(2+)</name>
        <dbReference type="ChEBI" id="CHEBI:29105"/>
    </ligand>
</feature>
<feature type="binding site" evidence="1">
    <location>
        <position position="148"/>
    </location>
    <ligand>
        <name>Zn(2+)</name>
        <dbReference type="ChEBI" id="CHEBI:29105"/>
    </ligand>
</feature>
<feature type="binding site" evidence="1">
    <location>
        <position position="183"/>
    </location>
    <ligand>
        <name>Zn(2+)</name>
        <dbReference type="ChEBI" id="CHEBI:29105"/>
    </ligand>
</feature>
<feature type="binding site" evidence="1">
    <location>
        <position position="186"/>
    </location>
    <ligand>
        <name>Zn(2+)</name>
        <dbReference type="ChEBI" id="CHEBI:29105"/>
    </ligand>
</feature>
<proteinExistence type="evidence at protein level"/>
<comment type="catalytic activity">
    <reaction evidence="1">
        <text>thymidine + ATP = dTMP + ADP + H(+)</text>
        <dbReference type="Rhea" id="RHEA:19129"/>
        <dbReference type="ChEBI" id="CHEBI:15378"/>
        <dbReference type="ChEBI" id="CHEBI:17748"/>
        <dbReference type="ChEBI" id="CHEBI:30616"/>
        <dbReference type="ChEBI" id="CHEBI:63528"/>
        <dbReference type="ChEBI" id="CHEBI:456216"/>
        <dbReference type="EC" id="2.7.1.21"/>
    </reaction>
</comment>
<comment type="subunit">
    <text evidence="1">Homotetramer.</text>
</comment>
<comment type="subcellular location">
    <subcellularLocation>
        <location evidence="1">Cytoplasm</location>
    </subcellularLocation>
</comment>
<comment type="similarity">
    <text evidence="1">Belongs to the thymidine kinase family.</text>
</comment>
<accession>Q5HE81</accession>
<sequence length="199" mass="22214">MYETYHSGWIECITGSMFSGKSEELIRRLRRGIYAKQKVVVFKPAIDDRYHKEKVVSHNGNAIEAINISKASEIMTHDLTNVDVIGIDEVQFFDDEIVSIVEKLSADGHRVIVAGLDMDFRGEPFEPMPKLMAVSEQVTKLQAVCAVCGSSSSRTQRLINGKPAKIDDPIILVGANESYEPRCRAHHIVAPSDNNKEEL</sequence>
<name>KITH_STAAC</name>